<gene>
    <name type="ordered locus">At1g46840</name>
    <name type="ORF">F2G19.29</name>
</gene>
<accession>Q9C629</accession>
<name>FB35_ARATH</name>
<organism>
    <name type="scientific">Arabidopsis thaliana</name>
    <name type="common">Mouse-ear cress</name>
    <dbReference type="NCBI Taxonomy" id="3702"/>
    <lineage>
        <taxon>Eukaryota</taxon>
        <taxon>Viridiplantae</taxon>
        <taxon>Streptophyta</taxon>
        <taxon>Embryophyta</taxon>
        <taxon>Tracheophyta</taxon>
        <taxon>Spermatophyta</taxon>
        <taxon>Magnoliopsida</taxon>
        <taxon>eudicotyledons</taxon>
        <taxon>Gunneridae</taxon>
        <taxon>Pentapetalae</taxon>
        <taxon>rosids</taxon>
        <taxon>malvids</taxon>
        <taxon>Brassicales</taxon>
        <taxon>Brassicaceae</taxon>
        <taxon>Camelineae</taxon>
        <taxon>Arabidopsis</taxon>
    </lineage>
</organism>
<evidence type="ECO:0000256" key="1">
    <source>
        <dbReference type="SAM" id="MobiDB-lite"/>
    </source>
</evidence>
<proteinExistence type="predicted"/>
<protein>
    <recommendedName>
        <fullName>Putative F-box protein At1g46840</fullName>
    </recommendedName>
</protein>
<reference key="1">
    <citation type="journal article" date="2000" name="Nature">
        <title>Sequence and analysis of chromosome 1 of the plant Arabidopsis thaliana.</title>
        <authorList>
            <person name="Theologis A."/>
            <person name="Ecker J.R."/>
            <person name="Palm C.J."/>
            <person name="Federspiel N.A."/>
            <person name="Kaul S."/>
            <person name="White O."/>
            <person name="Alonso J."/>
            <person name="Altafi H."/>
            <person name="Araujo R."/>
            <person name="Bowman C.L."/>
            <person name="Brooks S.Y."/>
            <person name="Buehler E."/>
            <person name="Chan A."/>
            <person name="Chao Q."/>
            <person name="Chen H."/>
            <person name="Cheuk R.F."/>
            <person name="Chin C.W."/>
            <person name="Chung M.K."/>
            <person name="Conn L."/>
            <person name="Conway A.B."/>
            <person name="Conway A.R."/>
            <person name="Creasy T.H."/>
            <person name="Dewar K."/>
            <person name="Dunn P."/>
            <person name="Etgu P."/>
            <person name="Feldblyum T.V."/>
            <person name="Feng J.-D."/>
            <person name="Fong B."/>
            <person name="Fujii C.Y."/>
            <person name="Gill J.E."/>
            <person name="Goldsmith A.D."/>
            <person name="Haas B."/>
            <person name="Hansen N.F."/>
            <person name="Hughes B."/>
            <person name="Huizar L."/>
            <person name="Hunter J.L."/>
            <person name="Jenkins J."/>
            <person name="Johnson-Hopson C."/>
            <person name="Khan S."/>
            <person name="Khaykin E."/>
            <person name="Kim C.J."/>
            <person name="Koo H.L."/>
            <person name="Kremenetskaia I."/>
            <person name="Kurtz D.B."/>
            <person name="Kwan A."/>
            <person name="Lam B."/>
            <person name="Langin-Hooper S."/>
            <person name="Lee A."/>
            <person name="Lee J.M."/>
            <person name="Lenz C.A."/>
            <person name="Li J.H."/>
            <person name="Li Y.-P."/>
            <person name="Lin X."/>
            <person name="Liu S.X."/>
            <person name="Liu Z.A."/>
            <person name="Luros J.S."/>
            <person name="Maiti R."/>
            <person name="Marziali A."/>
            <person name="Militscher J."/>
            <person name="Miranda M."/>
            <person name="Nguyen M."/>
            <person name="Nierman W.C."/>
            <person name="Osborne B.I."/>
            <person name="Pai G."/>
            <person name="Peterson J."/>
            <person name="Pham P.K."/>
            <person name="Rizzo M."/>
            <person name="Rooney T."/>
            <person name="Rowley D."/>
            <person name="Sakano H."/>
            <person name="Salzberg S.L."/>
            <person name="Schwartz J.R."/>
            <person name="Shinn P."/>
            <person name="Southwick A.M."/>
            <person name="Sun H."/>
            <person name="Tallon L.J."/>
            <person name="Tambunga G."/>
            <person name="Toriumi M.J."/>
            <person name="Town C.D."/>
            <person name="Utterback T."/>
            <person name="Van Aken S."/>
            <person name="Vaysberg M."/>
            <person name="Vysotskaia V.S."/>
            <person name="Walker M."/>
            <person name="Wu D."/>
            <person name="Yu G."/>
            <person name="Fraser C.M."/>
            <person name="Venter J.C."/>
            <person name="Davis R.W."/>
        </authorList>
    </citation>
    <scope>NUCLEOTIDE SEQUENCE [LARGE SCALE GENOMIC DNA]</scope>
    <source>
        <strain>cv. Columbia</strain>
    </source>
</reference>
<reference key="2">
    <citation type="journal article" date="2017" name="Plant J.">
        <title>Araport11: a complete reannotation of the Arabidopsis thaliana reference genome.</title>
        <authorList>
            <person name="Cheng C.Y."/>
            <person name="Krishnakumar V."/>
            <person name="Chan A.P."/>
            <person name="Thibaud-Nissen F."/>
            <person name="Schobel S."/>
            <person name="Town C.D."/>
        </authorList>
    </citation>
    <scope>GENOME REANNOTATION</scope>
    <source>
        <strain>cv. Columbia</strain>
    </source>
</reference>
<feature type="chain" id="PRO_0000283311" description="Putative F-box protein At1g46840">
    <location>
        <begin position="1"/>
        <end position="475"/>
    </location>
</feature>
<feature type="domain" description="F-box">
    <location>
        <begin position="25"/>
        <end position="71"/>
    </location>
</feature>
<feature type="region of interest" description="Disordered" evidence="1">
    <location>
        <begin position="423"/>
        <end position="475"/>
    </location>
</feature>
<feature type="compositionally biased region" description="Low complexity" evidence="1">
    <location>
        <begin position="423"/>
        <end position="433"/>
    </location>
</feature>
<feature type="compositionally biased region" description="Basic and acidic residues" evidence="1">
    <location>
        <begin position="451"/>
        <end position="464"/>
    </location>
</feature>
<feature type="compositionally biased region" description="Basic residues" evidence="1">
    <location>
        <begin position="465"/>
        <end position="475"/>
    </location>
</feature>
<keyword id="KW-1185">Reference proteome</keyword>
<sequence>MNIQKDDWMDRRKIVRRNTQSSASTYVLEKLHIDLVIEILSRLSAKSIAICRCVSKQWNSLLVSQDFVESFLRSSLSRPRIWFTFRFDGKWNFFSSPQPQKFGNNLSVEATEHHMGSYENWYMKSCQSVHGFIFMSYNSKGMTDRTQVIWNPCTRQLITLPKLEPENLDFNSFFAYDPTEKQFKVLCMTVVNKQQTTSYKYQVLTLGTGPLLWRNIECPFMYRLRDKSNRGICINGVLYFIGWIKCSTMIIICFDVSSEKFSFIKIENAFIVTLINYRGKLGVYLVVYGSPRGEVWVLDDTKNDNWSKHNFVCPYSGQENSTWATGTGELVWPSSPWTQPFYVVYYNLERQSFRRVDIKGMENKVSTGKDRYDGFFTFTNHVENLMVLPLHKKTIPIQDTLTNRVMERETLTRSPLTQTAYASSYSTTRSYKSSGKRCSDRSIGEDEQDDIGEKRGDQAAERRERSTKRGKHEVH</sequence>
<dbReference type="EMBL" id="AC083835">
    <property type="protein sequence ID" value="AAG50625.1"/>
    <property type="molecule type" value="Genomic_DNA"/>
</dbReference>
<dbReference type="EMBL" id="CP002684">
    <property type="protein sequence ID" value="AEE32130.1"/>
    <property type="molecule type" value="Genomic_DNA"/>
</dbReference>
<dbReference type="PIR" id="A96512">
    <property type="entry name" value="A96512"/>
</dbReference>
<dbReference type="RefSeq" id="NP_175148.1">
    <property type="nucleotide sequence ID" value="NM_103608.1"/>
</dbReference>
<dbReference type="SMR" id="Q9C629"/>
<dbReference type="BioGRID" id="26343">
    <property type="interactions" value="1"/>
</dbReference>
<dbReference type="FunCoup" id="Q9C629">
    <property type="interactions" value="24"/>
</dbReference>
<dbReference type="IntAct" id="Q9C629">
    <property type="interactions" value="1"/>
</dbReference>
<dbReference type="PaxDb" id="3702-AT1G46840.1"/>
<dbReference type="EnsemblPlants" id="AT1G46840.1">
    <property type="protein sequence ID" value="AT1G46840.1"/>
    <property type="gene ID" value="AT1G46840"/>
</dbReference>
<dbReference type="GeneID" id="841118"/>
<dbReference type="Gramene" id="AT1G46840.1">
    <property type="protein sequence ID" value="AT1G46840.1"/>
    <property type="gene ID" value="AT1G46840"/>
</dbReference>
<dbReference type="KEGG" id="ath:AT1G46840"/>
<dbReference type="Araport" id="AT1G46840"/>
<dbReference type="TAIR" id="AT1G46840"/>
<dbReference type="eggNOG" id="ENOG502SNHU">
    <property type="taxonomic scope" value="Eukaryota"/>
</dbReference>
<dbReference type="HOGENOM" id="CLU_027176_8_1_1"/>
<dbReference type="InParanoid" id="Q9C629"/>
<dbReference type="PhylomeDB" id="Q9C629"/>
<dbReference type="PRO" id="PR:Q9C629"/>
<dbReference type="Proteomes" id="UP000006548">
    <property type="component" value="Chromosome 1"/>
</dbReference>
<dbReference type="ExpressionAtlas" id="Q9C629">
    <property type="expression patterns" value="baseline and differential"/>
</dbReference>
<dbReference type="CDD" id="cd22157">
    <property type="entry name" value="F-box_AtFBW1-like"/>
    <property type="match status" value="1"/>
</dbReference>
<dbReference type="Gene3D" id="1.20.1280.50">
    <property type="match status" value="1"/>
</dbReference>
<dbReference type="InterPro" id="IPR013187">
    <property type="entry name" value="F-box-assoc_dom_typ3"/>
</dbReference>
<dbReference type="InterPro" id="IPR017451">
    <property type="entry name" value="F-box-assoc_interact_dom"/>
</dbReference>
<dbReference type="InterPro" id="IPR036047">
    <property type="entry name" value="F-box-like_dom_sf"/>
</dbReference>
<dbReference type="InterPro" id="IPR001810">
    <property type="entry name" value="F-box_dom"/>
</dbReference>
<dbReference type="NCBIfam" id="TIGR01640">
    <property type="entry name" value="F_box_assoc_1"/>
    <property type="match status" value="1"/>
</dbReference>
<dbReference type="PANTHER" id="PTHR31111">
    <property type="entry name" value="BNAA05G37150D PROTEIN-RELATED"/>
    <property type="match status" value="1"/>
</dbReference>
<dbReference type="PANTHER" id="PTHR31111:SF114">
    <property type="entry name" value="F-BOX ASSOCIATED UBIQUITINATION EFFECTOR FAMILY PROTEIN-RELATED"/>
    <property type="match status" value="1"/>
</dbReference>
<dbReference type="Pfam" id="PF00646">
    <property type="entry name" value="F-box"/>
    <property type="match status" value="1"/>
</dbReference>
<dbReference type="Pfam" id="PF08268">
    <property type="entry name" value="FBA_3"/>
    <property type="match status" value="1"/>
</dbReference>
<dbReference type="SMART" id="SM00256">
    <property type="entry name" value="FBOX"/>
    <property type="match status" value="1"/>
</dbReference>
<dbReference type="SUPFAM" id="SSF81383">
    <property type="entry name" value="F-box domain"/>
    <property type="match status" value="1"/>
</dbReference>